<accession>Q2P2N7</accession>
<gene>
    <name evidence="1" type="primary">flgI</name>
    <name type="ordered locus">XOO2435</name>
</gene>
<comment type="function">
    <text evidence="1">Assembles around the rod to form the L-ring and probably protects the motor/basal body from shearing forces during rotation.</text>
</comment>
<comment type="subunit">
    <text evidence="1">The basal body constitutes a major portion of the flagellar organelle and consists of four rings (L,P,S, and M) mounted on a central rod.</text>
</comment>
<comment type="subcellular location">
    <subcellularLocation>
        <location evidence="1">Periplasm</location>
    </subcellularLocation>
    <subcellularLocation>
        <location evidence="1">Bacterial flagellum basal body</location>
    </subcellularLocation>
</comment>
<comment type="similarity">
    <text evidence="1">Belongs to the FlgI family.</text>
</comment>
<reference key="1">
    <citation type="journal article" date="2005" name="Jpn. Agric. Res. Q.">
        <title>Genome sequence of Xanthomonas oryzae pv. oryzae suggests contribution of large numbers of effector genes and insertion sequences to its race diversity.</title>
        <authorList>
            <person name="Ochiai H."/>
            <person name="Inoue Y."/>
            <person name="Takeya M."/>
            <person name="Sasaki A."/>
            <person name="Kaku H."/>
        </authorList>
    </citation>
    <scope>NUCLEOTIDE SEQUENCE [LARGE SCALE GENOMIC DNA]</scope>
    <source>
        <strain>MAFF 311018</strain>
    </source>
</reference>
<sequence length="372" mass="37665">MNLSSLSFRLLATLLGACVVVAPASAERIKDLAQVGGVRGNALVGYGLVVGLDGSGDRTSQAPFTVQSLKNLLGELGVNVPANVNPQLKNVAAVAIHAELPPFAKPGQPIDITVSSIANAVSLRGGSLLMAPLKGADGQVYAMAQGNLVVGGFGAQGKDGSRVSVNVPSVGRIPNGAIVERALPDVFAGTGEITLNLHQNDFTTVSRMVAAIDSSFGAGTARAVDGVTVAVRSPTDPGARIGLLSRLENVELSPGDAPAKVVVNARTGTVVIGQLVRVMPAAIAHGSLTVTISENTNVSQPGAFSGGRTAVTQQSTITATSEGSRMFKFEGGTTLDQIVRAVNEVGAAPGDLVAILEALKQAGALSAELEVI</sequence>
<proteinExistence type="inferred from homology"/>
<protein>
    <recommendedName>
        <fullName evidence="1">Flagellar P-ring protein</fullName>
    </recommendedName>
    <alternativeName>
        <fullName evidence="1">Basal body P-ring protein</fullName>
    </alternativeName>
</protein>
<dbReference type="EMBL" id="AP008229">
    <property type="protein sequence ID" value="BAE69190.1"/>
    <property type="molecule type" value="Genomic_DNA"/>
</dbReference>
<dbReference type="RefSeq" id="WP_011259208.1">
    <property type="nucleotide sequence ID" value="NC_007705.1"/>
</dbReference>
<dbReference type="SMR" id="Q2P2N7"/>
<dbReference type="KEGG" id="xom:XOO2435"/>
<dbReference type="HOGENOM" id="CLU_045235_1_0_6"/>
<dbReference type="GO" id="GO:0009428">
    <property type="term" value="C:bacterial-type flagellum basal body, distal rod, P ring"/>
    <property type="evidence" value="ECO:0007669"/>
    <property type="project" value="InterPro"/>
</dbReference>
<dbReference type="GO" id="GO:0030288">
    <property type="term" value="C:outer membrane-bounded periplasmic space"/>
    <property type="evidence" value="ECO:0007669"/>
    <property type="project" value="InterPro"/>
</dbReference>
<dbReference type="GO" id="GO:0005198">
    <property type="term" value="F:structural molecule activity"/>
    <property type="evidence" value="ECO:0007669"/>
    <property type="project" value="InterPro"/>
</dbReference>
<dbReference type="GO" id="GO:0071973">
    <property type="term" value="P:bacterial-type flagellum-dependent cell motility"/>
    <property type="evidence" value="ECO:0007669"/>
    <property type="project" value="InterPro"/>
</dbReference>
<dbReference type="HAMAP" id="MF_00416">
    <property type="entry name" value="FlgI"/>
    <property type="match status" value="1"/>
</dbReference>
<dbReference type="InterPro" id="IPR001782">
    <property type="entry name" value="Flag_FlgI"/>
</dbReference>
<dbReference type="NCBIfam" id="NF003676">
    <property type="entry name" value="PRK05303.1"/>
    <property type="match status" value="1"/>
</dbReference>
<dbReference type="PANTHER" id="PTHR30381">
    <property type="entry name" value="FLAGELLAR P-RING PERIPLASMIC PROTEIN FLGI"/>
    <property type="match status" value="1"/>
</dbReference>
<dbReference type="PANTHER" id="PTHR30381:SF0">
    <property type="entry name" value="FLAGELLAR P-RING PROTEIN"/>
    <property type="match status" value="1"/>
</dbReference>
<dbReference type="Pfam" id="PF02119">
    <property type="entry name" value="FlgI"/>
    <property type="match status" value="1"/>
</dbReference>
<dbReference type="PRINTS" id="PR01010">
    <property type="entry name" value="FLGPRINGFLGI"/>
</dbReference>
<evidence type="ECO:0000255" key="1">
    <source>
        <dbReference type="HAMAP-Rule" id="MF_00416"/>
    </source>
</evidence>
<name>FLGI_XANOM</name>
<organism>
    <name type="scientific">Xanthomonas oryzae pv. oryzae (strain MAFF 311018)</name>
    <dbReference type="NCBI Taxonomy" id="342109"/>
    <lineage>
        <taxon>Bacteria</taxon>
        <taxon>Pseudomonadati</taxon>
        <taxon>Pseudomonadota</taxon>
        <taxon>Gammaproteobacteria</taxon>
        <taxon>Lysobacterales</taxon>
        <taxon>Lysobacteraceae</taxon>
        <taxon>Xanthomonas</taxon>
    </lineage>
</organism>
<feature type="signal peptide" evidence="1">
    <location>
        <begin position="1"/>
        <end position="26"/>
    </location>
</feature>
<feature type="chain" id="PRO_0000236328" description="Flagellar P-ring protein">
    <location>
        <begin position="27"/>
        <end position="372"/>
    </location>
</feature>
<keyword id="KW-0975">Bacterial flagellum</keyword>
<keyword id="KW-0574">Periplasm</keyword>
<keyword id="KW-0732">Signal</keyword>